<sequence>MTTILKHLPVGQRIGIAFSGGLDTSAALLWMRQKGAVPYAYTANLGQPDEEDYDAIPRRAMEYGAENARLIDCRKQLVAEGIAAIQCGAFHNTTGGLTYFNTTPLGRAVTGTMLVAAMKEDGVNIWGDGSTYKGNDIERFYRYGLLTNAELQIYKPWLDTDFIDELGGRHEMSEFMIACGFDYKMSVEKAYSTDSNMLGATHEAKDLEYLNSSVKIVNPIMGVKFWDESVKIPAEEVTVRFEQGHPVALNGKTFSDDVEMMLEANRIGGRHGLGMSDQIENRIIEAKSRGIYEAPGMALLHIAYERLLTGIHNEDTIEQYHAHGRQLGRLLYQGRWFDSQALMLRDSLQRWVASQITGEVTLELRRGNDYSILNTVSENLTYKPERLTMEKGDSVFSPDDRIGQLTMRNLDITDTREKLFGYAKTGLLSSSATSGVPQVENLENKGQ</sequence>
<accession>Q3YX68</accession>
<comment type="catalytic activity">
    <reaction evidence="1">
        <text>L-citrulline + L-aspartate + ATP = 2-(N(omega)-L-arginino)succinate + AMP + diphosphate + H(+)</text>
        <dbReference type="Rhea" id="RHEA:10932"/>
        <dbReference type="ChEBI" id="CHEBI:15378"/>
        <dbReference type="ChEBI" id="CHEBI:29991"/>
        <dbReference type="ChEBI" id="CHEBI:30616"/>
        <dbReference type="ChEBI" id="CHEBI:33019"/>
        <dbReference type="ChEBI" id="CHEBI:57472"/>
        <dbReference type="ChEBI" id="CHEBI:57743"/>
        <dbReference type="ChEBI" id="CHEBI:456215"/>
        <dbReference type="EC" id="6.3.4.5"/>
    </reaction>
</comment>
<comment type="pathway">
    <text evidence="1">Amino-acid biosynthesis; L-arginine biosynthesis; L-arginine from L-ornithine and carbamoyl phosphate: step 2/3.</text>
</comment>
<comment type="subunit">
    <text evidence="1">Homotetramer.</text>
</comment>
<comment type="subcellular location">
    <subcellularLocation>
        <location evidence="1">Cytoplasm</location>
    </subcellularLocation>
</comment>
<comment type="similarity">
    <text evidence="1">Belongs to the argininosuccinate synthase family. Type 2 subfamily.</text>
</comment>
<organism>
    <name type="scientific">Shigella sonnei (strain Ss046)</name>
    <dbReference type="NCBI Taxonomy" id="300269"/>
    <lineage>
        <taxon>Bacteria</taxon>
        <taxon>Pseudomonadati</taxon>
        <taxon>Pseudomonadota</taxon>
        <taxon>Gammaproteobacteria</taxon>
        <taxon>Enterobacterales</taxon>
        <taxon>Enterobacteriaceae</taxon>
        <taxon>Shigella</taxon>
    </lineage>
</organism>
<name>ASSY_SHISS</name>
<reference key="1">
    <citation type="journal article" date="2005" name="Nucleic Acids Res.">
        <title>Genome dynamics and diversity of Shigella species, the etiologic agents of bacillary dysentery.</title>
        <authorList>
            <person name="Yang F."/>
            <person name="Yang J."/>
            <person name="Zhang X."/>
            <person name="Chen L."/>
            <person name="Jiang Y."/>
            <person name="Yan Y."/>
            <person name="Tang X."/>
            <person name="Wang J."/>
            <person name="Xiong Z."/>
            <person name="Dong J."/>
            <person name="Xue Y."/>
            <person name="Zhu Y."/>
            <person name="Xu X."/>
            <person name="Sun L."/>
            <person name="Chen S."/>
            <person name="Nie H."/>
            <person name="Peng J."/>
            <person name="Xu J."/>
            <person name="Wang Y."/>
            <person name="Yuan Z."/>
            <person name="Wen Y."/>
            <person name="Yao Z."/>
            <person name="Shen Y."/>
            <person name="Qiang B."/>
            <person name="Hou Y."/>
            <person name="Yu J."/>
            <person name="Jin Q."/>
        </authorList>
    </citation>
    <scope>NUCLEOTIDE SEQUENCE [LARGE SCALE GENOMIC DNA]</scope>
    <source>
        <strain>Ss046</strain>
    </source>
</reference>
<proteinExistence type="inferred from homology"/>
<evidence type="ECO:0000255" key="1">
    <source>
        <dbReference type="HAMAP-Rule" id="MF_00581"/>
    </source>
</evidence>
<feature type="chain" id="PRO_1000025444" description="Argininosuccinate synthase">
    <location>
        <begin position="1"/>
        <end position="447"/>
    </location>
</feature>
<feature type="binding site" evidence="1">
    <location>
        <begin position="17"/>
        <end position="25"/>
    </location>
    <ligand>
        <name>ATP</name>
        <dbReference type="ChEBI" id="CHEBI:30616"/>
    </ligand>
</feature>
<feature type="binding site" evidence="1">
    <location>
        <position position="43"/>
    </location>
    <ligand>
        <name>ATP</name>
        <dbReference type="ChEBI" id="CHEBI:30616"/>
    </ligand>
</feature>
<feature type="binding site" evidence="1">
    <location>
        <position position="99"/>
    </location>
    <ligand>
        <name>L-citrulline</name>
        <dbReference type="ChEBI" id="CHEBI:57743"/>
    </ligand>
</feature>
<feature type="binding site" evidence="1">
    <location>
        <position position="129"/>
    </location>
    <ligand>
        <name>ATP</name>
        <dbReference type="ChEBI" id="CHEBI:30616"/>
    </ligand>
</feature>
<feature type="binding site" evidence="1">
    <location>
        <position position="131"/>
    </location>
    <ligand>
        <name>ATP</name>
        <dbReference type="ChEBI" id="CHEBI:30616"/>
    </ligand>
</feature>
<feature type="binding site" evidence="1">
    <location>
        <position position="131"/>
    </location>
    <ligand>
        <name>L-aspartate</name>
        <dbReference type="ChEBI" id="CHEBI:29991"/>
    </ligand>
</feature>
<feature type="binding site" evidence="1">
    <location>
        <position position="135"/>
    </location>
    <ligand>
        <name>L-aspartate</name>
        <dbReference type="ChEBI" id="CHEBI:29991"/>
    </ligand>
</feature>
<feature type="binding site" evidence="1">
    <location>
        <position position="135"/>
    </location>
    <ligand>
        <name>L-citrulline</name>
        <dbReference type="ChEBI" id="CHEBI:57743"/>
    </ligand>
</feature>
<feature type="binding site" evidence="1">
    <location>
        <position position="136"/>
    </location>
    <ligand>
        <name>ATP</name>
        <dbReference type="ChEBI" id="CHEBI:30616"/>
    </ligand>
</feature>
<feature type="binding site" evidence="1">
    <location>
        <position position="136"/>
    </location>
    <ligand>
        <name>L-aspartate</name>
        <dbReference type="ChEBI" id="CHEBI:29991"/>
    </ligand>
</feature>
<feature type="binding site" evidence="1">
    <location>
        <position position="139"/>
    </location>
    <ligand>
        <name>L-citrulline</name>
        <dbReference type="ChEBI" id="CHEBI:57743"/>
    </ligand>
</feature>
<feature type="binding site" evidence="1">
    <location>
        <position position="192"/>
    </location>
    <ligand>
        <name>L-citrulline</name>
        <dbReference type="ChEBI" id="CHEBI:57743"/>
    </ligand>
</feature>
<feature type="binding site" evidence="1">
    <location>
        <position position="194"/>
    </location>
    <ligand>
        <name>ATP</name>
        <dbReference type="ChEBI" id="CHEBI:30616"/>
    </ligand>
</feature>
<feature type="binding site" evidence="1">
    <location>
        <position position="201"/>
    </location>
    <ligand>
        <name>L-citrulline</name>
        <dbReference type="ChEBI" id="CHEBI:57743"/>
    </ligand>
</feature>
<feature type="binding site" evidence="1">
    <location>
        <position position="203"/>
    </location>
    <ligand>
        <name>L-citrulline</name>
        <dbReference type="ChEBI" id="CHEBI:57743"/>
    </ligand>
</feature>
<feature type="binding site" evidence="1">
    <location>
        <position position="280"/>
    </location>
    <ligand>
        <name>L-citrulline</name>
        <dbReference type="ChEBI" id="CHEBI:57743"/>
    </ligand>
</feature>
<gene>
    <name evidence="1" type="primary">argG</name>
    <name type="ordered locus">SSON_3320</name>
</gene>
<keyword id="KW-0028">Amino-acid biosynthesis</keyword>
<keyword id="KW-0055">Arginine biosynthesis</keyword>
<keyword id="KW-0067">ATP-binding</keyword>
<keyword id="KW-0963">Cytoplasm</keyword>
<keyword id="KW-0436">Ligase</keyword>
<keyword id="KW-0547">Nucleotide-binding</keyword>
<keyword id="KW-1185">Reference proteome</keyword>
<protein>
    <recommendedName>
        <fullName evidence="1">Argininosuccinate synthase</fullName>
        <ecNumber evidence="1">6.3.4.5</ecNumber>
    </recommendedName>
    <alternativeName>
        <fullName evidence="1">Citrulline--aspartate ligase</fullName>
    </alternativeName>
</protein>
<dbReference type="EC" id="6.3.4.5" evidence="1"/>
<dbReference type="EMBL" id="CP000038">
    <property type="protein sequence ID" value="AAZ89894.1"/>
    <property type="molecule type" value="Genomic_DNA"/>
</dbReference>
<dbReference type="RefSeq" id="WP_000207683.1">
    <property type="nucleotide sequence ID" value="NC_007384.1"/>
</dbReference>
<dbReference type="SMR" id="Q3YX68"/>
<dbReference type="GeneID" id="93778809"/>
<dbReference type="KEGG" id="ssn:SSON_3320"/>
<dbReference type="HOGENOM" id="CLU_032784_4_1_6"/>
<dbReference type="UniPathway" id="UPA00068">
    <property type="reaction ID" value="UER00113"/>
</dbReference>
<dbReference type="Proteomes" id="UP000002529">
    <property type="component" value="Chromosome"/>
</dbReference>
<dbReference type="GO" id="GO:0005737">
    <property type="term" value="C:cytoplasm"/>
    <property type="evidence" value="ECO:0007669"/>
    <property type="project" value="UniProtKB-SubCell"/>
</dbReference>
<dbReference type="GO" id="GO:0004055">
    <property type="term" value="F:argininosuccinate synthase activity"/>
    <property type="evidence" value="ECO:0007669"/>
    <property type="project" value="UniProtKB-UniRule"/>
</dbReference>
<dbReference type="GO" id="GO:0005524">
    <property type="term" value="F:ATP binding"/>
    <property type="evidence" value="ECO:0007669"/>
    <property type="project" value="UniProtKB-UniRule"/>
</dbReference>
<dbReference type="GO" id="GO:0042803">
    <property type="term" value="F:protein homodimerization activity"/>
    <property type="evidence" value="ECO:0007669"/>
    <property type="project" value="InterPro"/>
</dbReference>
<dbReference type="GO" id="GO:0000053">
    <property type="term" value="P:argininosuccinate metabolic process"/>
    <property type="evidence" value="ECO:0007669"/>
    <property type="project" value="TreeGrafter"/>
</dbReference>
<dbReference type="GO" id="GO:0006526">
    <property type="term" value="P:L-arginine biosynthetic process"/>
    <property type="evidence" value="ECO:0007669"/>
    <property type="project" value="UniProtKB-UniRule"/>
</dbReference>
<dbReference type="GO" id="GO:0000050">
    <property type="term" value="P:urea cycle"/>
    <property type="evidence" value="ECO:0007669"/>
    <property type="project" value="TreeGrafter"/>
</dbReference>
<dbReference type="CDD" id="cd01999">
    <property type="entry name" value="ASS"/>
    <property type="match status" value="1"/>
</dbReference>
<dbReference type="FunFam" id="1.10.287.400:FF:000001">
    <property type="entry name" value="Argininosuccinate synthase"/>
    <property type="match status" value="1"/>
</dbReference>
<dbReference type="Gene3D" id="1.10.287.400">
    <property type="match status" value="1"/>
</dbReference>
<dbReference type="Gene3D" id="3.90.1260.10">
    <property type="entry name" value="Argininosuccinate synthetase, chain A, domain 2"/>
    <property type="match status" value="1"/>
</dbReference>
<dbReference type="Gene3D" id="3.40.50.620">
    <property type="entry name" value="HUPs"/>
    <property type="match status" value="1"/>
</dbReference>
<dbReference type="HAMAP" id="MF_00581">
    <property type="entry name" value="Arg_succ_synth_type2"/>
    <property type="match status" value="1"/>
</dbReference>
<dbReference type="InterPro" id="IPR023437">
    <property type="entry name" value="Arg_succ_synth_type2_subfam"/>
</dbReference>
<dbReference type="InterPro" id="IPR048268">
    <property type="entry name" value="Arginosuc_syn_C"/>
</dbReference>
<dbReference type="InterPro" id="IPR048267">
    <property type="entry name" value="Arginosuc_syn_N"/>
</dbReference>
<dbReference type="InterPro" id="IPR001518">
    <property type="entry name" value="Arginosuc_synth"/>
</dbReference>
<dbReference type="InterPro" id="IPR018223">
    <property type="entry name" value="Arginosuc_synth_CS"/>
</dbReference>
<dbReference type="InterPro" id="IPR023434">
    <property type="entry name" value="Arginosuc_synth_type_1_subfam"/>
</dbReference>
<dbReference type="InterPro" id="IPR024074">
    <property type="entry name" value="AS_cat/multimer_dom_body"/>
</dbReference>
<dbReference type="InterPro" id="IPR024073">
    <property type="entry name" value="AS_multimer_C_tail"/>
</dbReference>
<dbReference type="InterPro" id="IPR014729">
    <property type="entry name" value="Rossmann-like_a/b/a_fold"/>
</dbReference>
<dbReference type="NCBIfam" id="TIGR00032">
    <property type="entry name" value="argG"/>
    <property type="match status" value="1"/>
</dbReference>
<dbReference type="NCBIfam" id="NF003779">
    <property type="entry name" value="PRK05370.1"/>
    <property type="match status" value="1"/>
</dbReference>
<dbReference type="PANTHER" id="PTHR11587">
    <property type="entry name" value="ARGININOSUCCINATE SYNTHASE"/>
    <property type="match status" value="1"/>
</dbReference>
<dbReference type="PANTHER" id="PTHR11587:SF2">
    <property type="entry name" value="ARGININOSUCCINATE SYNTHASE"/>
    <property type="match status" value="1"/>
</dbReference>
<dbReference type="Pfam" id="PF20979">
    <property type="entry name" value="Arginosuc_syn_C"/>
    <property type="match status" value="1"/>
</dbReference>
<dbReference type="Pfam" id="PF00764">
    <property type="entry name" value="Arginosuc_synth"/>
    <property type="match status" value="1"/>
</dbReference>
<dbReference type="SUPFAM" id="SSF52402">
    <property type="entry name" value="Adenine nucleotide alpha hydrolases-like"/>
    <property type="match status" value="1"/>
</dbReference>
<dbReference type="SUPFAM" id="SSF69864">
    <property type="entry name" value="Argininosuccinate synthetase, C-terminal domain"/>
    <property type="match status" value="1"/>
</dbReference>
<dbReference type="PROSITE" id="PS00564">
    <property type="entry name" value="ARGININOSUCCIN_SYN_1"/>
    <property type="match status" value="1"/>
</dbReference>
<dbReference type="PROSITE" id="PS00565">
    <property type="entry name" value="ARGININOSUCCIN_SYN_2"/>
    <property type="match status" value="1"/>
</dbReference>